<proteinExistence type="inferred from homology"/>
<accession>Q896K3</accession>
<reference key="1">
    <citation type="journal article" date="2003" name="Proc. Natl. Acad. Sci. U.S.A.">
        <title>The genome sequence of Clostridium tetani, the causative agent of tetanus disease.</title>
        <authorList>
            <person name="Brueggemann H."/>
            <person name="Baeumer S."/>
            <person name="Fricke W.F."/>
            <person name="Wiezer A."/>
            <person name="Liesegang H."/>
            <person name="Decker I."/>
            <person name="Herzberg C."/>
            <person name="Martinez-Arias R."/>
            <person name="Merkl R."/>
            <person name="Henne A."/>
            <person name="Gottschalk G."/>
        </authorList>
    </citation>
    <scope>NUCLEOTIDE SEQUENCE [LARGE SCALE GENOMIC DNA]</scope>
    <source>
        <strain>Massachusetts / E88</strain>
    </source>
</reference>
<comment type="function">
    <text evidence="1">Produces ATP from ADP in the presence of a proton gradient across the membrane. The V-type beta chain is a regulatory subunit.</text>
</comment>
<comment type="similarity">
    <text evidence="1">Belongs to the ATPase alpha/beta chains family.</text>
</comment>
<name>VATB1_CLOTE</name>
<feature type="chain" id="PRO_0000322494" description="V-type ATP synthase beta chain 1">
    <location>
        <begin position="1"/>
        <end position="461"/>
    </location>
</feature>
<evidence type="ECO:0000255" key="1">
    <source>
        <dbReference type="HAMAP-Rule" id="MF_00310"/>
    </source>
</evidence>
<organism>
    <name type="scientific">Clostridium tetani (strain Massachusetts / E88)</name>
    <dbReference type="NCBI Taxonomy" id="212717"/>
    <lineage>
        <taxon>Bacteria</taxon>
        <taxon>Bacillati</taxon>
        <taxon>Bacillota</taxon>
        <taxon>Clostridia</taxon>
        <taxon>Eubacteriales</taxon>
        <taxon>Clostridiaceae</taxon>
        <taxon>Clostridium</taxon>
    </lineage>
</organism>
<protein>
    <recommendedName>
        <fullName evidence="1">V-type ATP synthase beta chain 1</fullName>
    </recommendedName>
    <alternativeName>
        <fullName evidence="1">V-ATPase subunit B 1</fullName>
    </alternativeName>
</protein>
<gene>
    <name evidence="1" type="primary">atpB1</name>
    <name type="ordered locus">CTC_01000</name>
</gene>
<sequence length="461" mass="51214">MLKEYRTVKEVVGPLMLVDGVENVKFDELVEIEIQTGEIRRGRVLEINEDKALVQLFEGSAGINIKGSKAKFLGKPLEISVSEDMLGRVFDGLGRPKDEGPRIIPEKRLDINGIPINPVARNYPSEFIQTGISAIDGLNTLVRGQKLPVFSGSGLPHAQLAAQIARQAKVLNSDSKFAVVFAAVGITFEEAEFFVDDFTKTGAIDRSVLFMNLANDPAIERIATPRMALTTAEYLAFEKGMHVLVILTDLTNYCEALREVSAARKEVPGRRGYPGYLYTDLATLYERAGRIKGKEGSITQIPILTMPEDDKTHPIPDLTGYITEGQIILSRELYRKGVMPPIDVLPSLSRLKDKGIGEGKTREDHADTMNQLFAGYAQGKEAKELAVILGESALSDVDKQYAKFGDAFEKQYVSQGFTTNRTIEETLNLGWELLSILPRTELKRIRDAYLEKYLPKEKSKE</sequence>
<keyword id="KW-0066">ATP synthesis</keyword>
<keyword id="KW-0375">Hydrogen ion transport</keyword>
<keyword id="KW-0406">Ion transport</keyword>
<keyword id="KW-1185">Reference proteome</keyword>
<keyword id="KW-0813">Transport</keyword>
<dbReference type="EMBL" id="AE015927">
    <property type="protein sequence ID" value="AAO35587.1"/>
    <property type="molecule type" value="Genomic_DNA"/>
</dbReference>
<dbReference type="RefSeq" id="WP_011099249.1">
    <property type="nucleotide sequence ID" value="NC_004557.1"/>
</dbReference>
<dbReference type="SMR" id="Q896K3"/>
<dbReference type="STRING" id="212717.CTC_01000"/>
<dbReference type="GeneID" id="24253717"/>
<dbReference type="KEGG" id="ctc:CTC_01000"/>
<dbReference type="HOGENOM" id="CLU_022916_0_0_9"/>
<dbReference type="OrthoDB" id="9802718at2"/>
<dbReference type="Proteomes" id="UP000001412">
    <property type="component" value="Chromosome"/>
</dbReference>
<dbReference type="GO" id="GO:0005524">
    <property type="term" value="F:ATP binding"/>
    <property type="evidence" value="ECO:0007669"/>
    <property type="project" value="UniProtKB-UniRule"/>
</dbReference>
<dbReference type="GO" id="GO:0046933">
    <property type="term" value="F:proton-transporting ATP synthase activity, rotational mechanism"/>
    <property type="evidence" value="ECO:0007669"/>
    <property type="project" value="UniProtKB-UniRule"/>
</dbReference>
<dbReference type="GO" id="GO:0042777">
    <property type="term" value="P:proton motive force-driven plasma membrane ATP synthesis"/>
    <property type="evidence" value="ECO:0007669"/>
    <property type="project" value="UniProtKB-UniRule"/>
</dbReference>
<dbReference type="CDD" id="cd18112">
    <property type="entry name" value="ATP-synt_V_A-type_beta_C"/>
    <property type="match status" value="1"/>
</dbReference>
<dbReference type="CDD" id="cd18118">
    <property type="entry name" value="ATP-synt_V_A-type_beta_N"/>
    <property type="match status" value="1"/>
</dbReference>
<dbReference type="CDD" id="cd01135">
    <property type="entry name" value="V_A-ATPase_B"/>
    <property type="match status" value="1"/>
</dbReference>
<dbReference type="Gene3D" id="3.40.50.12240">
    <property type="match status" value="1"/>
</dbReference>
<dbReference type="HAMAP" id="MF_00310">
    <property type="entry name" value="ATP_synth_B_arch"/>
    <property type="match status" value="1"/>
</dbReference>
<dbReference type="InterPro" id="IPR055190">
    <property type="entry name" value="ATP-synt_VA_C"/>
</dbReference>
<dbReference type="InterPro" id="IPR020003">
    <property type="entry name" value="ATPase_a/bsu_AS"/>
</dbReference>
<dbReference type="InterPro" id="IPR004100">
    <property type="entry name" value="ATPase_F1/V1/A1_a/bsu_N"/>
</dbReference>
<dbReference type="InterPro" id="IPR000194">
    <property type="entry name" value="ATPase_F1/V1/A1_a/bsu_nucl-bd"/>
</dbReference>
<dbReference type="InterPro" id="IPR027417">
    <property type="entry name" value="P-loop_NTPase"/>
</dbReference>
<dbReference type="InterPro" id="IPR022879">
    <property type="entry name" value="V-ATPase_su_B/beta"/>
</dbReference>
<dbReference type="NCBIfam" id="NF003235">
    <property type="entry name" value="PRK04196.1"/>
    <property type="match status" value="1"/>
</dbReference>
<dbReference type="PANTHER" id="PTHR43389">
    <property type="entry name" value="V-TYPE PROTON ATPASE SUBUNIT B"/>
    <property type="match status" value="1"/>
</dbReference>
<dbReference type="PANTHER" id="PTHR43389:SF4">
    <property type="entry name" value="V-TYPE PROTON ATPASE SUBUNIT B"/>
    <property type="match status" value="1"/>
</dbReference>
<dbReference type="Pfam" id="PF00006">
    <property type="entry name" value="ATP-synt_ab"/>
    <property type="match status" value="1"/>
</dbReference>
<dbReference type="Pfam" id="PF02874">
    <property type="entry name" value="ATP-synt_ab_N"/>
    <property type="match status" value="1"/>
</dbReference>
<dbReference type="Pfam" id="PF22919">
    <property type="entry name" value="ATP-synt_VA_C"/>
    <property type="match status" value="1"/>
</dbReference>
<dbReference type="PIRSF" id="PIRSF039114">
    <property type="entry name" value="V-ATPsynth_beta/V-ATPase_B"/>
    <property type="match status" value="1"/>
</dbReference>
<dbReference type="SUPFAM" id="SSF52540">
    <property type="entry name" value="P-loop containing nucleoside triphosphate hydrolases"/>
    <property type="match status" value="1"/>
</dbReference>
<dbReference type="PROSITE" id="PS00152">
    <property type="entry name" value="ATPASE_ALPHA_BETA"/>
    <property type="match status" value="1"/>
</dbReference>